<feature type="chain" id="PRO_1000128941" description="Large ribosomal subunit protein eL37">
    <location>
        <begin position="1"/>
        <end position="58"/>
    </location>
</feature>
<feature type="zinc finger region" description="C4-type" evidence="1">
    <location>
        <begin position="20"/>
        <end position="38"/>
    </location>
</feature>
<feature type="region of interest" description="Disordered" evidence="2">
    <location>
        <begin position="1"/>
        <end position="26"/>
    </location>
</feature>
<feature type="compositionally biased region" description="Polar residues" evidence="2">
    <location>
        <begin position="1"/>
        <end position="17"/>
    </location>
</feature>
<feature type="binding site" evidence="1">
    <location>
        <position position="20"/>
    </location>
    <ligand>
        <name>Zn(2+)</name>
        <dbReference type="ChEBI" id="CHEBI:29105"/>
    </ligand>
</feature>
<feature type="binding site" evidence="1">
    <location>
        <position position="23"/>
    </location>
    <ligand>
        <name>Zn(2+)</name>
        <dbReference type="ChEBI" id="CHEBI:29105"/>
    </ligand>
</feature>
<feature type="binding site" evidence="1">
    <location>
        <position position="35"/>
    </location>
    <ligand>
        <name>Zn(2+)</name>
        <dbReference type="ChEBI" id="CHEBI:29105"/>
    </ligand>
</feature>
<feature type="binding site" evidence="1">
    <location>
        <position position="38"/>
    </location>
    <ligand>
        <name>Zn(2+)</name>
        <dbReference type="ChEBI" id="CHEBI:29105"/>
    </ligand>
</feature>
<dbReference type="EMBL" id="AM774415">
    <property type="protein sequence ID" value="CAP14078.1"/>
    <property type="molecule type" value="Genomic_DNA"/>
</dbReference>
<dbReference type="SMR" id="B0R5R1"/>
<dbReference type="EnsemblBacteria" id="CAP14078">
    <property type="protein sequence ID" value="CAP14078"/>
    <property type="gene ID" value="OE_3141R"/>
</dbReference>
<dbReference type="KEGG" id="hsl:OE_3141R"/>
<dbReference type="HOGENOM" id="CLU_208825_0_0_2"/>
<dbReference type="PhylomeDB" id="B0R5R1"/>
<dbReference type="Proteomes" id="UP000001321">
    <property type="component" value="Chromosome"/>
</dbReference>
<dbReference type="GO" id="GO:0022625">
    <property type="term" value="C:cytosolic large ribosomal subunit"/>
    <property type="evidence" value="ECO:0007669"/>
    <property type="project" value="TreeGrafter"/>
</dbReference>
<dbReference type="GO" id="GO:0019843">
    <property type="term" value="F:rRNA binding"/>
    <property type="evidence" value="ECO:0007669"/>
    <property type="project" value="UniProtKB-KW"/>
</dbReference>
<dbReference type="GO" id="GO:0003735">
    <property type="term" value="F:structural constituent of ribosome"/>
    <property type="evidence" value="ECO:0007669"/>
    <property type="project" value="InterPro"/>
</dbReference>
<dbReference type="GO" id="GO:0008270">
    <property type="term" value="F:zinc ion binding"/>
    <property type="evidence" value="ECO:0007669"/>
    <property type="project" value="UniProtKB-UniRule"/>
</dbReference>
<dbReference type="GO" id="GO:0006412">
    <property type="term" value="P:translation"/>
    <property type="evidence" value="ECO:0007669"/>
    <property type="project" value="UniProtKB-UniRule"/>
</dbReference>
<dbReference type="FunFam" id="2.20.25.30:FF:000003">
    <property type="entry name" value="50S ribosomal protein L37e"/>
    <property type="match status" value="1"/>
</dbReference>
<dbReference type="Gene3D" id="2.20.25.30">
    <property type="match status" value="1"/>
</dbReference>
<dbReference type="HAMAP" id="MF_00547">
    <property type="entry name" value="Ribosomal_eL37"/>
    <property type="match status" value="1"/>
</dbReference>
<dbReference type="InterPro" id="IPR001569">
    <property type="entry name" value="Ribosomal_eL37"/>
</dbReference>
<dbReference type="InterPro" id="IPR011331">
    <property type="entry name" value="Ribosomal_eL37/eL43"/>
</dbReference>
<dbReference type="InterPro" id="IPR018267">
    <property type="entry name" value="Ribosomal_eL37_CS"/>
</dbReference>
<dbReference type="InterPro" id="IPR011332">
    <property type="entry name" value="Ribosomal_zn-bd"/>
</dbReference>
<dbReference type="NCBIfam" id="NF003214">
    <property type="entry name" value="PRK04179.1"/>
    <property type="match status" value="1"/>
</dbReference>
<dbReference type="PANTHER" id="PTHR10768">
    <property type="entry name" value="60S RIBOSOMAL PROTEIN L37"/>
    <property type="match status" value="1"/>
</dbReference>
<dbReference type="PANTHER" id="PTHR10768:SF0">
    <property type="entry name" value="RIBOSOMAL PROTEIN L37"/>
    <property type="match status" value="1"/>
</dbReference>
<dbReference type="Pfam" id="PF01907">
    <property type="entry name" value="Ribosomal_L37e"/>
    <property type="match status" value="1"/>
</dbReference>
<dbReference type="SUPFAM" id="SSF57829">
    <property type="entry name" value="Zn-binding ribosomal proteins"/>
    <property type="match status" value="1"/>
</dbReference>
<dbReference type="PROSITE" id="PS01077">
    <property type="entry name" value="RIBOSOMAL_L37E"/>
    <property type="match status" value="1"/>
</dbReference>
<organism>
    <name type="scientific">Halobacterium salinarum (strain ATCC 29341 / DSM 671 / R1)</name>
    <dbReference type="NCBI Taxonomy" id="478009"/>
    <lineage>
        <taxon>Archaea</taxon>
        <taxon>Methanobacteriati</taxon>
        <taxon>Methanobacteriota</taxon>
        <taxon>Stenosarchaea group</taxon>
        <taxon>Halobacteria</taxon>
        <taxon>Halobacteriales</taxon>
        <taxon>Halobacteriaceae</taxon>
        <taxon>Halobacterium</taxon>
        <taxon>Halobacterium salinarum NRC-34001</taxon>
    </lineage>
</organism>
<reference key="1">
    <citation type="journal article" date="2008" name="Genomics">
        <title>Evolution in the laboratory: the genome of Halobacterium salinarum strain R1 compared to that of strain NRC-1.</title>
        <authorList>
            <person name="Pfeiffer F."/>
            <person name="Schuster S.C."/>
            <person name="Broicher A."/>
            <person name="Falb M."/>
            <person name="Palm P."/>
            <person name="Rodewald K."/>
            <person name="Ruepp A."/>
            <person name="Soppa J."/>
            <person name="Tittor J."/>
            <person name="Oesterhelt D."/>
        </authorList>
    </citation>
    <scope>NUCLEOTIDE SEQUENCE [LARGE SCALE GENOMIC DNA]</scope>
    <source>
        <strain>ATCC 29341 / DSM 671 / R1</strain>
    </source>
</reference>
<accession>B0R5R1</accession>
<comment type="function">
    <text evidence="1">Binds to the 23S rRNA.</text>
</comment>
<comment type="cofactor">
    <cofactor evidence="1">
        <name>Zn(2+)</name>
        <dbReference type="ChEBI" id="CHEBI:29105"/>
    </cofactor>
    <text evidence="1">Binds 1 zinc ion per subunit.</text>
</comment>
<comment type="similarity">
    <text evidence="1">Belongs to the eukaryotic ribosomal protein eL37 family.</text>
</comment>
<name>RL37_HALS3</name>
<protein>
    <recommendedName>
        <fullName evidence="1">Large ribosomal subunit protein eL37</fullName>
    </recommendedName>
    <alternativeName>
        <fullName evidence="3">50S ribosomal protein L37e</fullName>
    </alternativeName>
</protein>
<proteinExistence type="inferred from homology"/>
<evidence type="ECO:0000255" key="1">
    <source>
        <dbReference type="HAMAP-Rule" id="MF_00547"/>
    </source>
</evidence>
<evidence type="ECO:0000256" key="2">
    <source>
        <dbReference type="SAM" id="MobiDB-lite"/>
    </source>
</evidence>
<evidence type="ECO:0000305" key="3"/>
<sequence>MTGAGTPSQGKKNTTTHTKCRRCGEKSYHTKKKVCSSCGFGASAKRRDYEWQGKTGDN</sequence>
<keyword id="KW-0479">Metal-binding</keyword>
<keyword id="KW-0687">Ribonucleoprotein</keyword>
<keyword id="KW-0689">Ribosomal protein</keyword>
<keyword id="KW-0694">RNA-binding</keyword>
<keyword id="KW-0699">rRNA-binding</keyword>
<keyword id="KW-0862">Zinc</keyword>
<keyword id="KW-0863">Zinc-finger</keyword>
<gene>
    <name evidence="1" type="primary">rpl37e</name>
    <name type="ordered locus">OE_3141R</name>
</gene>